<evidence type="ECO:0000250" key="1"/>
<evidence type="ECO:0000255" key="2">
    <source>
        <dbReference type="PROSITE-ProRule" id="PRU00169"/>
    </source>
</evidence>
<evidence type="ECO:0000255" key="3">
    <source>
        <dbReference type="PROSITE-ProRule" id="PRU01091"/>
    </source>
</evidence>
<reference key="1">
    <citation type="journal article" date="2002" name="Nature">
        <title>Complete genome sequence of the model actinomycete Streptomyces coelicolor A3(2).</title>
        <authorList>
            <person name="Bentley S.D."/>
            <person name="Chater K.F."/>
            <person name="Cerdeno-Tarraga A.-M."/>
            <person name="Challis G.L."/>
            <person name="Thomson N.R."/>
            <person name="James K.D."/>
            <person name="Harris D.E."/>
            <person name="Quail M.A."/>
            <person name="Kieser H."/>
            <person name="Harper D."/>
            <person name="Bateman A."/>
            <person name="Brown S."/>
            <person name="Chandra G."/>
            <person name="Chen C.W."/>
            <person name="Collins M."/>
            <person name="Cronin A."/>
            <person name="Fraser A."/>
            <person name="Goble A."/>
            <person name="Hidalgo J."/>
            <person name="Hornsby T."/>
            <person name="Howarth S."/>
            <person name="Huang C.-H."/>
            <person name="Kieser T."/>
            <person name="Larke L."/>
            <person name="Murphy L.D."/>
            <person name="Oliver K."/>
            <person name="O'Neil S."/>
            <person name="Rabbinowitsch E."/>
            <person name="Rajandream M.A."/>
            <person name="Rutherford K.M."/>
            <person name="Rutter S."/>
            <person name="Seeger K."/>
            <person name="Saunders D."/>
            <person name="Sharp S."/>
            <person name="Squares R."/>
            <person name="Squares S."/>
            <person name="Taylor K."/>
            <person name="Warren T."/>
            <person name="Wietzorrek A."/>
            <person name="Woodward J.R."/>
            <person name="Barrell B.G."/>
            <person name="Parkhill J."/>
            <person name="Hopwood D.A."/>
        </authorList>
    </citation>
    <scope>NUCLEOTIDE SEQUENCE [LARGE SCALE GENOMIC DNA]</scope>
    <source>
        <strain>ATCC BAA-471 / A3(2) / M145</strain>
    </source>
</reference>
<protein>
    <recommendedName>
        <fullName>Transcriptional regulatory protein CutR</fullName>
    </recommendedName>
    <alternativeName>
        <fullName>Defective melC1 suppressor protein</fullName>
    </alternativeName>
</protein>
<accession>P0A4I1</accession>
<accession>Q03756</accession>
<name>CUTR_STRCO</name>
<dbReference type="EMBL" id="AL939125">
    <property type="protein sequence ID" value="CAA16471.1"/>
    <property type="molecule type" value="Genomic_DNA"/>
</dbReference>
<dbReference type="PIR" id="T34814">
    <property type="entry name" value="T34814"/>
</dbReference>
<dbReference type="RefSeq" id="NP_629984.1">
    <property type="nucleotide sequence ID" value="NC_003888.3"/>
</dbReference>
<dbReference type="RefSeq" id="WP_003993508.1">
    <property type="nucleotide sequence ID" value="NZ_VNID01000007.1"/>
</dbReference>
<dbReference type="SMR" id="P0A4I1"/>
<dbReference type="STRING" id="100226.gene:17763522"/>
<dbReference type="PaxDb" id="100226-SCO5862"/>
<dbReference type="KEGG" id="sco:SCO5862"/>
<dbReference type="PATRIC" id="fig|100226.15.peg.5961"/>
<dbReference type="eggNOG" id="COG0745">
    <property type="taxonomic scope" value="Bacteria"/>
</dbReference>
<dbReference type="HOGENOM" id="CLU_000445_30_1_11"/>
<dbReference type="InParanoid" id="P0A4I1"/>
<dbReference type="OrthoDB" id="9802426at2"/>
<dbReference type="PhylomeDB" id="P0A4I1"/>
<dbReference type="PRO" id="PR:P0A4I1"/>
<dbReference type="Proteomes" id="UP000001973">
    <property type="component" value="Chromosome"/>
</dbReference>
<dbReference type="GO" id="GO:0005829">
    <property type="term" value="C:cytosol"/>
    <property type="evidence" value="ECO:0000318"/>
    <property type="project" value="GO_Central"/>
</dbReference>
<dbReference type="GO" id="GO:0032993">
    <property type="term" value="C:protein-DNA complex"/>
    <property type="evidence" value="ECO:0000318"/>
    <property type="project" value="GO_Central"/>
</dbReference>
<dbReference type="GO" id="GO:0000156">
    <property type="term" value="F:phosphorelay response regulator activity"/>
    <property type="evidence" value="ECO:0000318"/>
    <property type="project" value="GO_Central"/>
</dbReference>
<dbReference type="GO" id="GO:0000976">
    <property type="term" value="F:transcription cis-regulatory region binding"/>
    <property type="evidence" value="ECO:0000318"/>
    <property type="project" value="GO_Central"/>
</dbReference>
<dbReference type="GO" id="GO:0006355">
    <property type="term" value="P:regulation of DNA-templated transcription"/>
    <property type="evidence" value="ECO:0000318"/>
    <property type="project" value="GO_Central"/>
</dbReference>
<dbReference type="CDD" id="cd19935">
    <property type="entry name" value="REC_OmpR_CusR-like"/>
    <property type="match status" value="1"/>
</dbReference>
<dbReference type="CDD" id="cd00383">
    <property type="entry name" value="trans_reg_C"/>
    <property type="match status" value="1"/>
</dbReference>
<dbReference type="FunFam" id="1.10.10.10:FF:000179">
    <property type="entry name" value="DNA-binding response OmpR family regulator"/>
    <property type="match status" value="1"/>
</dbReference>
<dbReference type="FunFam" id="3.40.50.2300:FF:000026">
    <property type="entry name" value="DNA-binding response OmpR family regulator"/>
    <property type="match status" value="1"/>
</dbReference>
<dbReference type="Gene3D" id="3.40.50.2300">
    <property type="match status" value="1"/>
</dbReference>
<dbReference type="Gene3D" id="6.10.250.690">
    <property type="match status" value="1"/>
</dbReference>
<dbReference type="Gene3D" id="1.10.10.10">
    <property type="entry name" value="Winged helix-like DNA-binding domain superfamily/Winged helix DNA-binding domain"/>
    <property type="match status" value="1"/>
</dbReference>
<dbReference type="InterPro" id="IPR011006">
    <property type="entry name" value="CheY-like_superfamily"/>
</dbReference>
<dbReference type="InterPro" id="IPR001867">
    <property type="entry name" value="OmpR/PhoB-type_DNA-bd"/>
</dbReference>
<dbReference type="InterPro" id="IPR001789">
    <property type="entry name" value="Sig_transdc_resp-reg_receiver"/>
</dbReference>
<dbReference type="InterPro" id="IPR039420">
    <property type="entry name" value="WalR-like"/>
</dbReference>
<dbReference type="InterPro" id="IPR036388">
    <property type="entry name" value="WH-like_DNA-bd_sf"/>
</dbReference>
<dbReference type="PANTHER" id="PTHR48111">
    <property type="entry name" value="REGULATOR OF RPOS"/>
    <property type="match status" value="1"/>
</dbReference>
<dbReference type="PANTHER" id="PTHR48111:SF36">
    <property type="entry name" value="TRANSCRIPTIONAL REGULATORY PROTEIN CUTR"/>
    <property type="match status" value="1"/>
</dbReference>
<dbReference type="Pfam" id="PF00072">
    <property type="entry name" value="Response_reg"/>
    <property type="match status" value="1"/>
</dbReference>
<dbReference type="Pfam" id="PF00486">
    <property type="entry name" value="Trans_reg_C"/>
    <property type="match status" value="1"/>
</dbReference>
<dbReference type="SMART" id="SM00448">
    <property type="entry name" value="REC"/>
    <property type="match status" value="1"/>
</dbReference>
<dbReference type="SMART" id="SM00862">
    <property type="entry name" value="Trans_reg_C"/>
    <property type="match status" value="1"/>
</dbReference>
<dbReference type="SUPFAM" id="SSF52172">
    <property type="entry name" value="CheY-like"/>
    <property type="match status" value="1"/>
</dbReference>
<dbReference type="PROSITE" id="PS51755">
    <property type="entry name" value="OMPR_PHOB"/>
    <property type="match status" value="1"/>
</dbReference>
<dbReference type="PROSITE" id="PS50110">
    <property type="entry name" value="RESPONSE_REGULATORY"/>
    <property type="match status" value="1"/>
</dbReference>
<keyword id="KW-0238">DNA-binding</keyword>
<keyword id="KW-0597">Phosphoprotein</keyword>
<keyword id="KW-1185">Reference proteome</keyword>
<keyword id="KW-0804">Transcription</keyword>
<keyword id="KW-0805">Transcription regulation</keyword>
<keyword id="KW-0902">Two-component regulatory system</keyword>
<proteinExistence type="inferred from homology"/>
<gene>
    <name type="primary">cutR</name>
    <name type="ordered locus">SCO5862</name>
    <name type="ORF">SC2E9.03</name>
</gene>
<feature type="chain" id="PRO_0000081085" description="Transcriptional regulatory protein CutR">
    <location>
        <begin position="1"/>
        <end position="217"/>
    </location>
</feature>
<feature type="domain" description="Response regulatory" evidence="2">
    <location>
        <begin position="2"/>
        <end position="116"/>
    </location>
</feature>
<feature type="DNA-binding region" description="OmpR/PhoB-type" evidence="3">
    <location>
        <begin position="124"/>
        <end position="217"/>
    </location>
</feature>
<feature type="modified residue" description="4-aspartylphosphate" evidence="2">
    <location>
        <position position="51"/>
    </location>
</feature>
<organism>
    <name type="scientific">Streptomyces coelicolor (strain ATCC BAA-471 / A3(2) / M145)</name>
    <dbReference type="NCBI Taxonomy" id="100226"/>
    <lineage>
        <taxon>Bacteria</taxon>
        <taxon>Bacillati</taxon>
        <taxon>Actinomycetota</taxon>
        <taxon>Actinomycetes</taxon>
        <taxon>Kitasatosporales</taxon>
        <taxon>Streptomycetaceae</taxon>
        <taxon>Streptomyces</taxon>
        <taxon>Streptomyces albidoflavus group</taxon>
    </lineage>
</organism>
<sequence length="217" mass="23915">MRVLVVEDEQLLADAVATGLRREAMAVDVVYDGAAALERIGVNDYDVVVLDRDLPLVHGDDVCRKIVELGMPTRVLMLTASGDVSDRVEGLEIGADDYLPKPFAFSELIARVRALGRRTSVPLPPVLERAGIKLDPNRREVFRDGKEVQLAPKEFAVLEVLMRSEGAVVSAEQLLEKAWDENTDPFTNVVRVTVMTLRRKLGEPPVIVTVPGSGYRI</sequence>
<comment type="function">
    <text evidence="1">Member of the two-component regulatory system CutS/CutR, involved in the regulation of copper metabolism. CutR suppresses a defective melC1 gene, encoding a putative copper-transfer gene, probably by altering copper metabolism (By similarity).</text>
</comment>